<name>CYF_BRARR</name>
<reference key="1">
    <citation type="journal article" date="1994" name="Eur. J. Biochem.">
        <title>Proteolytic removal of the C-terminal transmembrane region of cytochrome f during extraction from turnip and charlock leaves generates a water-soluble monomeric form of the protein.</title>
        <authorList>
            <person name="Gray J.C."/>
            <person name="Rochford R.J."/>
            <person name="Packman L.C."/>
        </authorList>
    </citation>
    <scope>NUCLEOTIDE SEQUENCE [GENOMIC DNA]</scope>
    <scope>PROTEIN SEQUENCE OF 36-45 AND 285-287</scope>
    <scope>PROTEOLYTIC CLEAVAGE</scope>
    <source>
        <strain>cv. Snowball</strain>
    </source>
</reference>
<reference key="2">
    <citation type="journal article" date="1994" name="Structure">
        <title>Crystal structure of chloroplast cytochrome f reveals a novel cytochrome fold and unexpected heme ligation.</title>
        <authorList>
            <person name="Martinez S.E."/>
            <person name="Huang D."/>
            <person name="Szczepaniak A."/>
            <person name="Cramer W.A."/>
            <person name="Smith J.L."/>
        </authorList>
    </citation>
    <scope>X-RAY CRYSTALLOGRAPHY (2.3 ANGSTROMS) OF 36-285 IN COMPLEX WITH HEME</scope>
    <scope>COFACTOR</scope>
</reference>
<reference key="3">
    <citation type="journal article" date="1996" name="Protein Sci.">
        <title>The heme redox center of chloroplast cytochrome f is linked to a buried five-water chain.</title>
        <authorList>
            <person name="Martinez S.E."/>
            <person name="Huang D."/>
            <person name="Ponomarev M."/>
            <person name="Cramer W.A."/>
            <person name="Smith J.L."/>
        </authorList>
    </citation>
    <scope>X-RAY CRYSTALLOGRAPHY (1.96 ANGSTROMS) OF 36-285 IN COMPLEX WITH HEME</scope>
    <scope>COFACTOR</scope>
</reference>
<reference key="4">
    <citation type="journal article" date="1998" name="Structure">
        <title>The structure of the complex of plastocyanin and cytochrome f, determined by paramagnetic NMR and restrained rigid-body molecular dynamics.</title>
        <authorList>
            <person name="Ubbink M."/>
            <person name="Ejdebaeck M."/>
            <person name="Karlsson B.G."/>
            <person name="Bendall D.S."/>
        </authorList>
    </citation>
    <scope>STRUCTURE BY NMR OF 36-285 IN COMPLEX WITH HEME</scope>
    <scope>COFACTOR</scope>
</reference>
<geneLocation type="chloroplast"/>
<accession>P36438</accession>
<feature type="signal peptide" evidence="3">
    <location>
        <begin position="1"/>
        <end position="35"/>
    </location>
</feature>
<feature type="chain" id="PRO_0000023806" description="Cytochrome f">
    <location>
        <begin position="36"/>
        <end position="320"/>
    </location>
</feature>
<feature type="transmembrane region" description="Helical" evidence="2">
    <location>
        <begin position="286"/>
        <end position="305"/>
    </location>
</feature>
<feature type="binding site" description="axial binding residue" evidence="4 5 6">
    <location>
        <position position="36"/>
    </location>
    <ligand>
        <name>heme</name>
        <dbReference type="ChEBI" id="CHEBI:30413"/>
    </ligand>
    <ligandPart>
        <name>Fe</name>
        <dbReference type="ChEBI" id="CHEBI:18248"/>
    </ligandPart>
</feature>
<feature type="binding site" description="covalent" evidence="4 5 6">
    <location>
        <position position="56"/>
    </location>
    <ligand>
        <name>heme</name>
        <dbReference type="ChEBI" id="CHEBI:30413"/>
    </ligand>
</feature>
<feature type="binding site" description="covalent" evidence="4 5 6">
    <location>
        <position position="59"/>
    </location>
    <ligand>
        <name>heme</name>
        <dbReference type="ChEBI" id="CHEBI:30413"/>
    </ligand>
</feature>
<feature type="binding site" description="axial binding residue" evidence="4 5 6">
    <location>
        <position position="60"/>
    </location>
    <ligand>
        <name>heme</name>
        <dbReference type="ChEBI" id="CHEBI:30413"/>
    </ligand>
    <ligandPart>
        <name>Fe</name>
        <dbReference type="ChEBI" id="CHEBI:18248"/>
    </ligandPart>
</feature>
<feature type="helix" evidence="8">
    <location>
        <begin position="37"/>
        <end position="43"/>
    </location>
</feature>
<feature type="strand" evidence="8">
    <location>
        <begin position="45"/>
        <end position="48"/>
    </location>
</feature>
<feature type="helix" evidence="8">
    <location>
        <begin position="55"/>
        <end position="58"/>
    </location>
</feature>
<feature type="strand" evidence="8">
    <location>
        <begin position="67"/>
        <end position="69"/>
    </location>
</feature>
<feature type="strand" evidence="8">
    <location>
        <begin position="72"/>
        <end position="74"/>
    </location>
</feature>
<feature type="strand" evidence="8">
    <location>
        <begin position="79"/>
        <end position="85"/>
    </location>
</feature>
<feature type="strand" evidence="8">
    <location>
        <begin position="99"/>
        <end position="102"/>
    </location>
</feature>
<feature type="strand" evidence="8">
    <location>
        <begin position="105"/>
        <end position="111"/>
    </location>
</feature>
<feature type="helix" evidence="8">
    <location>
        <begin position="121"/>
        <end position="123"/>
    </location>
</feature>
<feature type="helix" evidence="8">
    <location>
        <begin position="126"/>
        <end position="132"/>
    </location>
</feature>
<feature type="strand" evidence="8">
    <location>
        <begin position="138"/>
        <end position="141"/>
    </location>
</feature>
<feature type="strand" evidence="8">
    <location>
        <begin position="147"/>
        <end position="154"/>
    </location>
</feature>
<feature type="helix" evidence="8">
    <location>
        <begin position="155"/>
        <end position="158"/>
    </location>
</feature>
<feature type="strand" evidence="8">
    <location>
        <begin position="159"/>
        <end position="166"/>
    </location>
</feature>
<feature type="turn" evidence="8">
    <location>
        <begin position="170"/>
        <end position="172"/>
    </location>
</feature>
<feature type="strand" evidence="8">
    <location>
        <begin position="180"/>
        <end position="190"/>
    </location>
</feature>
<feature type="strand" evidence="8">
    <location>
        <begin position="202"/>
        <end position="204"/>
    </location>
</feature>
<feature type="strand" evidence="8">
    <location>
        <begin position="212"/>
        <end position="219"/>
    </location>
</feature>
<feature type="strand" evidence="8">
    <location>
        <begin position="225"/>
        <end position="231"/>
    </location>
</feature>
<feature type="turn" evidence="8">
    <location>
        <begin position="232"/>
        <end position="235"/>
    </location>
</feature>
<feature type="strand" evidence="8">
    <location>
        <begin position="236"/>
        <end position="242"/>
    </location>
</feature>
<feature type="strand" evidence="8">
    <location>
        <begin position="261"/>
        <end position="263"/>
    </location>
</feature>
<feature type="strand" evidence="8">
    <location>
        <begin position="270"/>
        <end position="280"/>
    </location>
</feature>
<protein>
    <recommendedName>
        <fullName>Cytochrome f</fullName>
    </recommendedName>
</protein>
<sequence length="320" mass="35389">MQTRNTFSWIREEITRSISVSLMIYIITWASISSAYPIFAQQNYENPREATGRIVCANCHLASKPVDIEVPQAVLPDTVFEAVVKIPYDMQLKQVLANGKKGALNVGAVLILPEGFELAPPDRISPEMKEKIGNLSFQNYRPNKKNILVIGPVPGQKYSEITFPILAPDPATNKDVHFLKYPIYVGGNRGRGQIYPDGSKSNNTVYNATAGGIISKILRKEKGGYEITIVDASNERQVIDIIPRGLELLVSEGESIKLDQPLTSNPNVGGFGQGDAEIVLQDPLRVQGLLFFLGSVVLAQIFLVLKKKQFEKVQLSEMNF</sequence>
<keyword id="KW-0002">3D-structure</keyword>
<keyword id="KW-0150">Chloroplast</keyword>
<keyword id="KW-0903">Direct protein sequencing</keyword>
<keyword id="KW-0249">Electron transport</keyword>
<keyword id="KW-0349">Heme</keyword>
<keyword id="KW-0408">Iron</keyword>
<keyword id="KW-0472">Membrane</keyword>
<keyword id="KW-0479">Metal-binding</keyword>
<keyword id="KW-0602">Photosynthesis</keyword>
<keyword id="KW-0934">Plastid</keyword>
<keyword id="KW-0732">Signal</keyword>
<keyword id="KW-0793">Thylakoid</keyword>
<keyword id="KW-0812">Transmembrane</keyword>
<keyword id="KW-1133">Transmembrane helix</keyword>
<keyword id="KW-0813">Transport</keyword>
<evidence type="ECO:0000250" key="1"/>
<evidence type="ECO:0000255" key="2"/>
<evidence type="ECO:0000269" key="3">
    <source>
    </source>
</evidence>
<evidence type="ECO:0000269" key="4">
    <source>
    </source>
</evidence>
<evidence type="ECO:0000269" key="5">
    <source>
    </source>
</evidence>
<evidence type="ECO:0000269" key="6">
    <source>
    </source>
</evidence>
<evidence type="ECO:0000305" key="7"/>
<evidence type="ECO:0007829" key="8">
    <source>
        <dbReference type="PDB" id="1HCZ"/>
    </source>
</evidence>
<gene>
    <name type="primary">petA</name>
</gene>
<proteinExistence type="evidence at protein level"/>
<organism>
    <name type="scientific">Brassica rapa subsp. rapa</name>
    <name type="common">Turnip</name>
    <dbReference type="NCBI Taxonomy" id="51350"/>
    <lineage>
        <taxon>Eukaryota</taxon>
        <taxon>Viridiplantae</taxon>
        <taxon>Streptophyta</taxon>
        <taxon>Embryophyta</taxon>
        <taxon>Tracheophyta</taxon>
        <taxon>Spermatophyta</taxon>
        <taxon>Magnoliopsida</taxon>
        <taxon>eudicotyledons</taxon>
        <taxon>Gunneridae</taxon>
        <taxon>Pentapetalae</taxon>
        <taxon>rosids</taxon>
        <taxon>malvids</taxon>
        <taxon>Brassicales</taxon>
        <taxon>Brassicaceae</taxon>
        <taxon>Brassiceae</taxon>
        <taxon>Brassica</taxon>
    </lineage>
</organism>
<comment type="function">
    <text evidence="1">Component of the cytochrome b6-f complex, which mediates electron transfer between photosystem II (PSII) and photosystem I (PSI), cyclic electron flow around PSI, and state transitions.</text>
</comment>
<comment type="cofactor">
    <cofactor evidence="4 5 6">
        <name>heme</name>
        <dbReference type="ChEBI" id="CHEBI:30413"/>
    </cofactor>
    <text evidence="4 5 6">Binds 1 heme group covalently.</text>
</comment>
<comment type="subunit">
    <text evidence="1">The 4 large subunits of the cytochrome b6-f complex are cytochrome b6, subunit IV (17 kDa polypeptide, petD), cytochrome f and the Rieske protein, while the 4 small subunits are PetG, PetL, PetM and PetN. The complex functions as a dimer (By similarity).</text>
</comment>
<comment type="subcellular location">
    <subcellularLocation>
        <location>Plastid</location>
        <location>Chloroplast thylakoid membrane</location>
        <topology>Single-pass membrane protein</topology>
    </subcellularLocation>
</comment>
<comment type="PTM">
    <text evidence="3">Purified from leaves as a water-soluble monomeric protein with a mass of 28.16 kDa, cleavage occurs after Gln-287 and separates the heme-binding from the membrane.</text>
</comment>
<comment type="similarity">
    <text evidence="7">Belongs to the cytochrome f family.</text>
</comment>
<dbReference type="EMBL" id="X77011">
    <property type="protein sequence ID" value="CAA54307.1"/>
    <property type="molecule type" value="Genomic_DNA"/>
</dbReference>
<dbReference type="PIR" id="S45661">
    <property type="entry name" value="S45661"/>
</dbReference>
<dbReference type="RefSeq" id="YP_009907374.1">
    <property type="nucleotide sequence ID" value="NC_049891.1"/>
</dbReference>
<dbReference type="PDB" id="1CTM">
    <property type="method" value="X-ray"/>
    <property type="resolution" value="2.30 A"/>
    <property type="chains" value="A=36-285"/>
</dbReference>
<dbReference type="PDB" id="1HCZ">
    <property type="method" value="X-ray"/>
    <property type="resolution" value="1.96 A"/>
    <property type="chains" value="A=36-287"/>
</dbReference>
<dbReference type="PDB" id="1TKW">
    <property type="method" value="NMR"/>
    <property type="chains" value="B=36-287"/>
</dbReference>
<dbReference type="PDB" id="2PCF">
    <property type="method" value="NMR"/>
    <property type="chains" value="B=36-285"/>
</dbReference>
<dbReference type="PDBsum" id="1CTM"/>
<dbReference type="PDBsum" id="1HCZ"/>
<dbReference type="PDBsum" id="1TKW"/>
<dbReference type="PDBsum" id="2PCF"/>
<dbReference type="SMR" id="P36438"/>
<dbReference type="DIP" id="DIP-62N"/>
<dbReference type="MINT" id="P36438"/>
<dbReference type="GeneID" id="56140907"/>
<dbReference type="EvolutionaryTrace" id="P36438"/>
<dbReference type="GO" id="GO:0009535">
    <property type="term" value="C:chloroplast thylakoid membrane"/>
    <property type="evidence" value="ECO:0007669"/>
    <property type="project" value="UniProtKB-SubCell"/>
</dbReference>
<dbReference type="GO" id="GO:0009055">
    <property type="term" value="F:electron transfer activity"/>
    <property type="evidence" value="ECO:0007669"/>
    <property type="project" value="UniProtKB-UniRule"/>
</dbReference>
<dbReference type="GO" id="GO:0020037">
    <property type="term" value="F:heme binding"/>
    <property type="evidence" value="ECO:0007669"/>
    <property type="project" value="InterPro"/>
</dbReference>
<dbReference type="GO" id="GO:0005506">
    <property type="term" value="F:iron ion binding"/>
    <property type="evidence" value="ECO:0007669"/>
    <property type="project" value="InterPro"/>
</dbReference>
<dbReference type="GO" id="GO:0015979">
    <property type="term" value="P:photosynthesis"/>
    <property type="evidence" value="ECO:0007669"/>
    <property type="project" value="UniProtKB-UniRule"/>
</dbReference>
<dbReference type="FunFam" id="1.20.5.700:FF:000001">
    <property type="entry name" value="Cytochrome f"/>
    <property type="match status" value="1"/>
</dbReference>
<dbReference type="FunFam" id="2.40.50.100:FF:000007">
    <property type="entry name" value="Cytochrome f"/>
    <property type="match status" value="1"/>
</dbReference>
<dbReference type="FunFam" id="2.60.40.830:FF:000001">
    <property type="entry name" value="Cytochrome f"/>
    <property type="match status" value="1"/>
</dbReference>
<dbReference type="Gene3D" id="2.40.50.100">
    <property type="match status" value="1"/>
</dbReference>
<dbReference type="Gene3D" id="2.60.40.830">
    <property type="entry name" value="Cytochrome f large domain"/>
    <property type="match status" value="1"/>
</dbReference>
<dbReference type="Gene3D" id="1.20.5.700">
    <property type="entry name" value="Single helix bin"/>
    <property type="match status" value="1"/>
</dbReference>
<dbReference type="HAMAP" id="MF_00610">
    <property type="entry name" value="Cytb6_f_cytF"/>
    <property type="match status" value="1"/>
</dbReference>
<dbReference type="InterPro" id="IPR024058">
    <property type="entry name" value="Cyt-f_TM"/>
</dbReference>
<dbReference type="InterPro" id="IPR002325">
    <property type="entry name" value="Cyt_f"/>
</dbReference>
<dbReference type="InterPro" id="IPR024094">
    <property type="entry name" value="Cyt_f_lg_dom"/>
</dbReference>
<dbReference type="InterPro" id="IPR036826">
    <property type="entry name" value="Cyt_f_lg_dom_sf"/>
</dbReference>
<dbReference type="InterPro" id="IPR011054">
    <property type="entry name" value="Rudment_hybrid_motif"/>
</dbReference>
<dbReference type="PANTHER" id="PTHR33288">
    <property type="match status" value="1"/>
</dbReference>
<dbReference type="PANTHER" id="PTHR33288:SF10">
    <property type="entry name" value="CYTOCHROME F"/>
    <property type="match status" value="1"/>
</dbReference>
<dbReference type="Pfam" id="PF01333">
    <property type="entry name" value="Apocytochr_F_C"/>
    <property type="match status" value="1"/>
</dbReference>
<dbReference type="Pfam" id="PF16639">
    <property type="entry name" value="Apocytochr_F_N"/>
    <property type="match status" value="1"/>
</dbReference>
<dbReference type="PRINTS" id="PR00610">
    <property type="entry name" value="CYTOCHROMEF"/>
</dbReference>
<dbReference type="SUPFAM" id="SSF103431">
    <property type="entry name" value="Cytochrome f subunit of the cytochrome b6f complex, transmembrane anchor"/>
    <property type="match status" value="1"/>
</dbReference>
<dbReference type="SUPFAM" id="SSF49441">
    <property type="entry name" value="Cytochrome f, large domain"/>
    <property type="match status" value="1"/>
</dbReference>
<dbReference type="SUPFAM" id="SSF51246">
    <property type="entry name" value="Rudiment single hybrid motif"/>
    <property type="match status" value="1"/>
</dbReference>
<dbReference type="PROSITE" id="PS51010">
    <property type="entry name" value="CYTF"/>
    <property type="match status" value="1"/>
</dbReference>